<keyword id="KW-0505">Motor protein</keyword>
<keyword id="KW-0514">Muscle protein</keyword>
<keyword id="KW-0518">Myosin</keyword>
<keyword id="KW-0677">Repeat</keyword>
<accession>O44107</accession>
<accession>Q24658</accession>
<accession>Q24660</accession>
<accession>Q27307</accession>
<accession>Q27386</accession>
<feature type="chain" id="PRO_0000198713" description="Myosin light chain alkali">
    <location>
        <begin position="1" status="less than"/>
        <end position="86"/>
    </location>
</feature>
<feature type="domain" description="EF-hand" evidence="1">
    <location>
        <begin position="11"/>
        <end position="46"/>
    </location>
</feature>
<feature type="non-terminal residue">
    <location>
        <position position="1"/>
    </location>
</feature>
<organism>
    <name type="scientific">Drosophila subobscura</name>
    <name type="common">Fruit fly</name>
    <dbReference type="NCBI Taxonomy" id="7241"/>
    <lineage>
        <taxon>Eukaryota</taxon>
        <taxon>Metazoa</taxon>
        <taxon>Ecdysozoa</taxon>
        <taxon>Arthropoda</taxon>
        <taxon>Hexapoda</taxon>
        <taxon>Insecta</taxon>
        <taxon>Pterygota</taxon>
        <taxon>Neoptera</taxon>
        <taxon>Endopterygota</taxon>
        <taxon>Diptera</taxon>
        <taxon>Brachycera</taxon>
        <taxon>Muscomorpha</taxon>
        <taxon>Ephydroidea</taxon>
        <taxon>Drosophilidae</taxon>
        <taxon>Drosophila</taxon>
        <taxon>Sophophora</taxon>
    </lineage>
</organism>
<proteinExistence type="evidence at transcript level"/>
<name>MLC1_DROSU</name>
<gene>
    <name type="primary">Mlc1</name>
</gene>
<dbReference type="EMBL" id="AF025812">
    <property type="protein sequence ID" value="AAB87897.1"/>
    <property type="molecule type" value="mRNA"/>
</dbReference>
<dbReference type="SMR" id="O44107"/>
<dbReference type="EnsemblMetazoa" id="XM_034804283.1">
    <property type="protein sequence ID" value="XP_034660174.1"/>
    <property type="gene ID" value="LOC117896193"/>
</dbReference>
<dbReference type="GO" id="GO:0005859">
    <property type="term" value="C:muscle myosin complex"/>
    <property type="evidence" value="ECO:0000250"/>
    <property type="project" value="UniProtKB"/>
</dbReference>
<dbReference type="GO" id="GO:0005509">
    <property type="term" value="F:calcium ion binding"/>
    <property type="evidence" value="ECO:0007669"/>
    <property type="project" value="InterPro"/>
</dbReference>
<dbReference type="FunFam" id="1.10.238.10:FF:000267">
    <property type="entry name" value="Myosin light chain alkali"/>
    <property type="match status" value="1"/>
</dbReference>
<dbReference type="Gene3D" id="1.10.238.10">
    <property type="entry name" value="EF-hand"/>
    <property type="match status" value="1"/>
</dbReference>
<dbReference type="InterPro" id="IPR050230">
    <property type="entry name" value="CALM/Myosin/TropC-like"/>
</dbReference>
<dbReference type="InterPro" id="IPR011992">
    <property type="entry name" value="EF-hand-dom_pair"/>
</dbReference>
<dbReference type="InterPro" id="IPR002048">
    <property type="entry name" value="EF_hand_dom"/>
</dbReference>
<dbReference type="PANTHER" id="PTHR23048">
    <property type="entry name" value="MYOSIN LIGHT CHAIN 1, 3"/>
    <property type="match status" value="1"/>
</dbReference>
<dbReference type="PANTHER" id="PTHR23048:SF33">
    <property type="entry name" value="MYOSIN LIGHT CHAIN ALKALI"/>
    <property type="match status" value="1"/>
</dbReference>
<dbReference type="Pfam" id="PF13499">
    <property type="entry name" value="EF-hand_7"/>
    <property type="match status" value="1"/>
</dbReference>
<dbReference type="SUPFAM" id="SSF47473">
    <property type="entry name" value="EF-hand"/>
    <property type="match status" value="1"/>
</dbReference>
<dbReference type="PROSITE" id="PS50222">
    <property type="entry name" value="EF_HAND_2"/>
    <property type="match status" value="1"/>
</dbReference>
<evidence type="ECO:0000255" key="1">
    <source>
        <dbReference type="PROSITE-ProRule" id="PRU00448"/>
    </source>
</evidence>
<protein>
    <recommendedName>
        <fullName>Myosin light chain alkali</fullName>
    </recommendedName>
</protein>
<comment type="subunit">
    <text>Myosin is a hexamer of 2 heavy chains and 4 light chains.</text>
</comment>
<sequence>YSQVKKEKEQGCYEDFIECLKLYDKEENGTMMLAELQHALLALGESLDDEQVETLFADCMDPEDDEGFIPYSQFIQRLMSDPVVFD</sequence>
<reference key="1">
    <citation type="journal article" date="1998" name="Genetica">
        <title>The molecular clock revisited: the rate of synonymous vs. replacement change in Drosophila.</title>
        <authorList>
            <person name="Zeng L.-W."/>
            <person name="Comeron J.M."/>
            <person name="Chen B."/>
            <person name="Kreitman M."/>
        </authorList>
    </citation>
    <scope>NUCLEOTIDE SEQUENCE [MRNA]</scope>
</reference>